<accession>A0A0N7KMH0</accession>
<accession>Q2TQ35</accession>
<keyword id="KW-0025">Alternative splicing</keyword>
<keyword id="KW-0238">DNA-binding</keyword>
<keyword id="KW-0539">Nucleus</keyword>
<keyword id="KW-1185">Reference proteome</keyword>
<keyword id="KW-0677">Repeat</keyword>
<keyword id="KW-0804">Transcription</keyword>
<keyword id="KW-0805">Transcription regulation</keyword>
<protein>
    <recommendedName>
        <fullName evidence="7">APETALA2-like protein 4</fullName>
    </recommendedName>
    <alternativeName>
        <fullName evidence="6">Protein GLOSSY 15</fullName>
        <shortName evidence="6">OsGL15</shortName>
    </alternativeName>
</protein>
<gene>
    <name evidence="7" type="primary">AP2-4</name>
    <name evidence="6" type="synonym">GL15</name>
    <name evidence="8" type="ordered locus">LOC_Os06g43220</name>
    <name evidence="8" type="ordered locus">Os06g0639200</name>
    <name evidence="11" type="ORF">OSNPB_060639200</name>
</gene>
<dbReference type="EMBL" id="AP014962">
    <property type="protein sequence ID" value="BAS98793.1"/>
    <property type="status" value="ALT_SEQ"/>
    <property type="molecule type" value="Genomic_DNA"/>
</dbReference>
<dbReference type="EMBL" id="AY685116">
    <property type="protein sequence ID" value="AAW78370.1"/>
    <property type="molecule type" value="mRNA"/>
</dbReference>
<dbReference type="RefSeq" id="XP_015642711.1">
    <property type="nucleotide sequence ID" value="XM_015787225.1"/>
</dbReference>
<dbReference type="RefSeq" id="XP_015642712.1">
    <property type="nucleotide sequence ID" value="XM_015787226.1"/>
</dbReference>
<dbReference type="SMR" id="A0A0N7KMH0"/>
<dbReference type="FunCoup" id="A0A0N7KMH0">
    <property type="interactions" value="19"/>
</dbReference>
<dbReference type="STRING" id="39947.A0A0N7KMH0"/>
<dbReference type="PaxDb" id="39947-A0A0N7KMH0"/>
<dbReference type="EnsemblPlants" id="Os06t0639200-02">
    <molecule id="A0A0N7KMH0-1"/>
    <property type="protein sequence ID" value="Os06t0639200-02"/>
    <property type="gene ID" value="Os06g0639200"/>
</dbReference>
<dbReference type="Gramene" id="Os06t0639200-02">
    <molecule id="A0A0N7KMH0-1"/>
    <property type="protein sequence ID" value="Os06t0639200-02"/>
    <property type="gene ID" value="Os06g0639200"/>
</dbReference>
<dbReference type="eggNOG" id="ENOG502R1D7">
    <property type="taxonomic scope" value="Eukaryota"/>
</dbReference>
<dbReference type="HOGENOM" id="CLU_035462_2_0_1"/>
<dbReference type="InParanoid" id="A0A0N7KMH0"/>
<dbReference type="OrthoDB" id="207175at2759"/>
<dbReference type="Proteomes" id="UP000059680">
    <property type="component" value="Chromosome 6"/>
</dbReference>
<dbReference type="GO" id="GO:0005634">
    <property type="term" value="C:nucleus"/>
    <property type="evidence" value="ECO:0007669"/>
    <property type="project" value="UniProtKB-SubCell"/>
</dbReference>
<dbReference type="GO" id="GO:0003677">
    <property type="term" value="F:DNA binding"/>
    <property type="evidence" value="ECO:0007669"/>
    <property type="project" value="UniProtKB-KW"/>
</dbReference>
<dbReference type="GO" id="GO:0003700">
    <property type="term" value="F:DNA-binding transcription factor activity"/>
    <property type="evidence" value="ECO:0007669"/>
    <property type="project" value="InterPro"/>
</dbReference>
<dbReference type="GO" id="GO:0009909">
    <property type="term" value="P:regulation of flower development"/>
    <property type="evidence" value="ECO:0000315"/>
    <property type="project" value="UniProtKB"/>
</dbReference>
<dbReference type="GO" id="GO:0080050">
    <property type="term" value="P:regulation of seed development"/>
    <property type="evidence" value="ECO:0000315"/>
    <property type="project" value="UniProtKB"/>
</dbReference>
<dbReference type="CDD" id="cd00018">
    <property type="entry name" value="AP2"/>
    <property type="match status" value="1"/>
</dbReference>
<dbReference type="FunFam" id="3.30.730.10:FF:000004">
    <property type="entry name" value="AP2-like ethylene-responsive transcription factor"/>
    <property type="match status" value="1"/>
</dbReference>
<dbReference type="Gene3D" id="3.30.730.10">
    <property type="entry name" value="AP2/ERF domain"/>
    <property type="match status" value="2"/>
</dbReference>
<dbReference type="InterPro" id="IPR001471">
    <property type="entry name" value="AP2/ERF_dom"/>
</dbReference>
<dbReference type="InterPro" id="IPR036955">
    <property type="entry name" value="AP2/ERF_dom_sf"/>
</dbReference>
<dbReference type="InterPro" id="IPR016177">
    <property type="entry name" value="DNA-bd_dom_sf"/>
</dbReference>
<dbReference type="PANTHER" id="PTHR32467">
    <property type="entry name" value="AP2-LIKE ETHYLENE-RESPONSIVE TRANSCRIPTION FACTOR"/>
    <property type="match status" value="1"/>
</dbReference>
<dbReference type="PANTHER" id="PTHR32467:SF9">
    <property type="entry name" value="APETALA2-LIKE PROTEIN 4"/>
    <property type="match status" value="1"/>
</dbReference>
<dbReference type="Pfam" id="PF00847">
    <property type="entry name" value="AP2"/>
    <property type="match status" value="2"/>
</dbReference>
<dbReference type="PRINTS" id="PR00367">
    <property type="entry name" value="ETHRSPELEMNT"/>
</dbReference>
<dbReference type="SMART" id="SM00380">
    <property type="entry name" value="AP2"/>
    <property type="match status" value="2"/>
</dbReference>
<dbReference type="SUPFAM" id="SSF54171">
    <property type="entry name" value="DNA-binding domain"/>
    <property type="match status" value="2"/>
</dbReference>
<dbReference type="PROSITE" id="PS51032">
    <property type="entry name" value="AP2_ERF"/>
    <property type="match status" value="2"/>
</dbReference>
<organism>
    <name type="scientific">Oryza sativa subsp. japonica</name>
    <name type="common">Rice</name>
    <dbReference type="NCBI Taxonomy" id="39947"/>
    <lineage>
        <taxon>Eukaryota</taxon>
        <taxon>Viridiplantae</taxon>
        <taxon>Streptophyta</taxon>
        <taxon>Embryophyta</taxon>
        <taxon>Tracheophyta</taxon>
        <taxon>Spermatophyta</taxon>
        <taxon>Magnoliopsida</taxon>
        <taxon>Liliopsida</taxon>
        <taxon>Poales</taxon>
        <taxon>Poaceae</taxon>
        <taxon>BOP clade</taxon>
        <taxon>Oryzoideae</taxon>
        <taxon>Oryzeae</taxon>
        <taxon>Oryzinae</taxon>
        <taxon>Oryza</taxon>
        <taxon>Oryza sativa</taxon>
    </lineage>
</organism>
<comment type="function">
    <text evidence="1 5 9">Probable transcription factor (By similarity). Involved in spikelet transition (Probable). Prevents lemma and palea elongation as well as grain growth (PubMed:28066457).</text>
</comment>
<comment type="subunit">
    <text evidence="1">May form homodimer.</text>
</comment>
<comment type="subcellular location">
    <subcellularLocation>
        <location evidence="3">Nucleus</location>
    </subcellularLocation>
</comment>
<comment type="alternative products">
    <event type="alternative splicing"/>
    <isoform>
        <id>A0A0N7KMH0-1</id>
        <name>1</name>
        <sequence type="displayed"/>
    </isoform>
    <isoform>
        <id>A0A0N7KMH0-2</id>
        <name>2</name>
        <sequence type="described" ref="VSP_059995 VSP_059996"/>
    </isoform>
</comment>
<comment type="induction">
    <text evidence="9 10">Target of miR172 microRNA mediated cleavage, particularly during floral organ development.</text>
</comment>
<comment type="similarity">
    <text evidence="8">Belongs to the AP2/ERF transcription factor family. AP2 subfamily.</text>
</comment>
<comment type="sequence caution" evidence="8">
    <conflict type="erroneous gene model prediction">
        <sequence resource="EMBL-CDS" id="BAS98793"/>
    </conflict>
</comment>
<name>AP24_ORYSJ</name>
<evidence type="ECO:0000250" key="1">
    <source>
        <dbReference type="UniProtKB" id="P47927"/>
    </source>
</evidence>
<evidence type="ECO:0000255" key="2"/>
<evidence type="ECO:0000255" key="3">
    <source>
        <dbReference type="PROSITE-ProRule" id="PRU00366"/>
    </source>
</evidence>
<evidence type="ECO:0000256" key="4">
    <source>
        <dbReference type="SAM" id="MobiDB-lite"/>
    </source>
</evidence>
<evidence type="ECO:0000269" key="5">
    <source>
    </source>
</evidence>
<evidence type="ECO:0000303" key="6">
    <source>
    </source>
</evidence>
<evidence type="ECO:0000303" key="7">
    <source>
    </source>
</evidence>
<evidence type="ECO:0000305" key="8"/>
<evidence type="ECO:0000305" key="9">
    <source>
    </source>
</evidence>
<evidence type="ECO:0000305" key="10">
    <source>
    </source>
</evidence>
<evidence type="ECO:0000312" key="11">
    <source>
        <dbReference type="EMBL" id="BAS98793.1"/>
    </source>
</evidence>
<sequence>MAATFYGVGSIALAMHEDDEEEGSGRVFGFAAGDLVRPAVVTQQLFPMTAAAAAVVPESTEQRHVAAAAEQWARPPSRKTRRGPRSRSSQYRGVTFYRRTGRWESHIWDCGKQVYLGGFDTAQAAARAYDQAAIKFRGVEADINFTLDDYKEDIKKMNNFSKEEFVQVLRRQGAGFVRGSSRFRGVTLHKCGKWEARIGQLMGKKYVYLGLYDTEMEAAKAYDKAAIKCCGKEAVTNFDTQAYEDELNLQSWDSELDLELSLGCSGGERAAGEVLHSAPSNQRTSLTFMLPEEEEMTACHRQRSIWARPSLAPAMPDGGAVIRPDQHQHHPSSRNMLLMSQVISSSGGGGGSGRQGAAELHMRPRHGWSSGGNNWAPPYAARPRLPGAEDDEDDDSAAAASSGFPMGQVATASSPSRPSSSSCSSRRSSTAAATATTGR</sequence>
<reference key="1">
    <citation type="journal article" date="2005" name="Nature">
        <title>The map-based sequence of the rice genome.</title>
        <authorList>
            <consortium name="International rice genome sequencing project (IRGSP)"/>
        </authorList>
    </citation>
    <scope>NUCLEOTIDE SEQUENCE [LARGE SCALE GENOMIC DNA]</scope>
    <source>
        <strain>cv. Nipponbare</strain>
    </source>
</reference>
<reference key="2">
    <citation type="journal article" date="2013" name="Rice">
        <title>Improvement of the Oryza sativa Nipponbare reference genome using next generation sequence and optical map data.</title>
        <authorList>
            <person name="Kawahara Y."/>
            <person name="de la Bastide M."/>
            <person name="Hamilton J.P."/>
            <person name="Kanamori H."/>
            <person name="McCombie W.R."/>
            <person name="Ouyang S."/>
            <person name="Schwartz D.C."/>
            <person name="Tanaka T."/>
            <person name="Wu J."/>
            <person name="Zhou S."/>
            <person name="Childs K.L."/>
            <person name="Davidson R.M."/>
            <person name="Lin H."/>
            <person name="Quesada-Ocampo L."/>
            <person name="Vaillancourt B."/>
            <person name="Sakai H."/>
            <person name="Lee S.S."/>
            <person name="Kim J."/>
            <person name="Numa H."/>
            <person name="Itoh T."/>
            <person name="Buell C.R."/>
            <person name="Matsumoto T."/>
        </authorList>
    </citation>
    <scope>GENOME REANNOTATION</scope>
    <source>
        <strain>cv. Nipponbare</strain>
    </source>
</reference>
<reference key="3">
    <citation type="submission" date="2004-07" db="EMBL/GenBank/DDBJ databases">
        <title>The AP2 subfamily genes in rice.</title>
        <authorList>
            <person name="Lee J."/>
            <person name="Lee D.Y."/>
            <person name="An G."/>
        </authorList>
    </citation>
    <scope>NUCLEOTIDE SEQUENCE [MRNA] OF 109-360 (ISOFORM 2)</scope>
</reference>
<reference key="4">
    <citation type="journal article" date="2015" name="Proc. Natl. Acad. Sci. U.S.A.">
        <title>Coordinated regulation of vegetative and reproductive branching in rice.</title>
        <authorList>
            <person name="Wang L."/>
            <person name="Sun S."/>
            <person name="Jin J."/>
            <person name="Fu D."/>
            <person name="Yang X."/>
            <person name="Weng X."/>
            <person name="Xu C."/>
            <person name="Li X."/>
            <person name="Xiao J."/>
            <person name="Zhang Q."/>
        </authorList>
    </citation>
    <scope>FUNCTION</scope>
    <scope>REPRESSION BY MIR172</scope>
</reference>
<reference key="5">
    <citation type="journal article" date="2016" name="Front. Plant Sci.">
        <title>OsMADS1 represses microRNA172 in elongation of palea/lemma development in rice.</title>
        <authorList>
            <person name="Dai Z."/>
            <person name="Wang J."/>
            <person name="Zhu M."/>
            <person name="Miao X."/>
            <person name="Shi Z."/>
        </authorList>
    </citation>
    <scope>FUNCTION</scope>
    <scope>REPRESSION BY MIR172</scope>
    <scope>GENE FAMILY</scope>
    <scope>NOMENCLATURE</scope>
    <source>
        <strain>cv. Zhonghua 11</strain>
    </source>
</reference>
<feature type="chain" id="PRO_0000445993" description="APETALA2-like protein 4">
    <location>
        <begin position="1"/>
        <end position="439"/>
    </location>
</feature>
<feature type="DNA-binding region" description="AP2/ERF 1" evidence="3">
    <location>
        <begin position="90"/>
        <end position="146"/>
    </location>
</feature>
<feature type="DNA-binding region" description="AP2/ERF 2" evidence="3">
    <location>
        <begin position="182"/>
        <end position="239"/>
    </location>
</feature>
<feature type="region of interest" description="Disordered" evidence="4">
    <location>
        <begin position="67"/>
        <end position="88"/>
    </location>
</feature>
<feature type="region of interest" description="Disordered" evidence="4">
    <location>
        <begin position="363"/>
        <end position="439"/>
    </location>
</feature>
<feature type="short sequence motif" description="Nuclear localization signal" evidence="2">
    <location>
        <begin position="78"/>
        <end position="87"/>
    </location>
</feature>
<feature type="short sequence motif" description="EAR" evidence="1">
    <location>
        <begin position="258"/>
        <end position="262"/>
    </location>
</feature>
<feature type="compositionally biased region" description="Basic residues" evidence="4">
    <location>
        <begin position="76"/>
        <end position="85"/>
    </location>
</feature>
<feature type="compositionally biased region" description="Low complexity" evidence="4">
    <location>
        <begin position="410"/>
        <end position="439"/>
    </location>
</feature>
<feature type="splice variant" id="VSP_059995" description="In isoform 2.">
    <original>SQVISSSGGGGGSGRQGAAELHMRPRH</original>
    <variation>VCMLTDSGVPTLIFLRSRALSRLSYSN</variation>
    <location>
        <begin position="340"/>
        <end position="366"/>
    </location>
</feature>
<feature type="splice variant" id="VSP_059996" description="In isoform 2.">
    <location>
        <begin position="367"/>
        <end position="439"/>
    </location>
</feature>
<proteinExistence type="evidence at transcript level"/>